<feature type="chain" id="PRO_0000194926" description="Transcriptional activator protein CUP2">
    <location>
        <begin position="1"/>
        <end position="225"/>
    </location>
</feature>
<feature type="DNA-binding region" description="Copper-fist" evidence="1">
    <location>
        <begin position="1"/>
        <end position="40"/>
    </location>
</feature>
<feature type="region of interest" description="Binds copper and DNA">
    <location>
        <begin position="1"/>
        <end position="108"/>
    </location>
</feature>
<feature type="region of interest" description="Required for transcriptional activation">
    <location>
        <begin position="109"/>
        <end position="225"/>
    </location>
</feature>
<feature type="binding site" evidence="1">
    <location>
        <position position="11"/>
    </location>
    <ligand>
        <name>Zn(2+)</name>
        <dbReference type="ChEBI" id="CHEBI:29105"/>
    </ligand>
</feature>
<feature type="binding site" evidence="1">
    <location>
        <position position="14"/>
    </location>
    <ligand>
        <name>Zn(2+)</name>
        <dbReference type="ChEBI" id="CHEBI:29105"/>
    </ligand>
</feature>
<feature type="binding site" evidence="1">
    <location>
        <position position="23"/>
    </location>
    <ligand>
        <name>Zn(2+)</name>
        <dbReference type="ChEBI" id="CHEBI:29105"/>
    </ligand>
</feature>
<feature type="binding site" evidence="1">
    <location>
        <position position="25"/>
    </location>
    <ligand>
        <name>Zn(2+)</name>
        <dbReference type="ChEBI" id="CHEBI:29105"/>
    </ligand>
</feature>
<dbReference type="EMBL" id="M22580">
    <property type="protein sequence ID" value="AAA66313.1"/>
    <property type="molecule type" value="Genomic_DNA"/>
</dbReference>
<dbReference type="EMBL" id="M24390">
    <property type="protein sequence ID" value="AAA34386.1"/>
    <property type="molecule type" value="Genomic_DNA"/>
</dbReference>
<dbReference type="EMBL" id="Z48618">
    <property type="protein sequence ID" value="CAA88533.1"/>
    <property type="molecule type" value="Genomic_DNA"/>
</dbReference>
<dbReference type="EMBL" id="X85757">
    <property type="protein sequence ID" value="CAA59765.1"/>
    <property type="molecule type" value="Genomic_DNA"/>
</dbReference>
<dbReference type="EMBL" id="M28520">
    <property type="protein sequence ID" value="AAA34542.1"/>
    <property type="molecule type" value="Genomic_DNA"/>
</dbReference>
<dbReference type="EMBL" id="Z72688">
    <property type="protein sequence ID" value="CAA96877.1"/>
    <property type="molecule type" value="Genomic_DNA"/>
</dbReference>
<dbReference type="EMBL" id="AY557820">
    <property type="protein sequence ID" value="AAS56146.1"/>
    <property type="molecule type" value="Genomic_DNA"/>
</dbReference>
<dbReference type="EMBL" id="BK006941">
    <property type="protein sequence ID" value="DAA07947.1"/>
    <property type="molecule type" value="Genomic_DNA"/>
</dbReference>
<dbReference type="PIR" id="A31926">
    <property type="entry name" value="A31926"/>
</dbReference>
<dbReference type="RefSeq" id="NP_011349.3">
    <property type="nucleotide sequence ID" value="NM_001181031.3"/>
</dbReference>
<dbReference type="SMR" id="P15315"/>
<dbReference type="BioGRID" id="33088">
    <property type="interactions" value="91"/>
</dbReference>
<dbReference type="DIP" id="DIP-1335N"/>
<dbReference type="FunCoup" id="P15315">
    <property type="interactions" value="784"/>
</dbReference>
<dbReference type="IntAct" id="P15315">
    <property type="interactions" value="9"/>
</dbReference>
<dbReference type="MINT" id="P15315"/>
<dbReference type="STRING" id="4932.YGL166W"/>
<dbReference type="iPTMnet" id="P15315"/>
<dbReference type="PaxDb" id="4932-YGL166W"/>
<dbReference type="PeptideAtlas" id="P15315"/>
<dbReference type="EnsemblFungi" id="YGL166W_mRNA">
    <property type="protein sequence ID" value="YGL166W"/>
    <property type="gene ID" value="YGL166W"/>
</dbReference>
<dbReference type="GeneID" id="852710"/>
<dbReference type="KEGG" id="sce:YGL166W"/>
<dbReference type="AGR" id="SGD:S000003134"/>
<dbReference type="SGD" id="S000003134">
    <property type="gene designation" value="CUP2"/>
</dbReference>
<dbReference type="VEuPathDB" id="FungiDB:YGL166W"/>
<dbReference type="eggNOG" id="ENOG502S7CA">
    <property type="taxonomic scope" value="Eukaryota"/>
</dbReference>
<dbReference type="GeneTree" id="ENSGT00940000176728"/>
<dbReference type="HOGENOM" id="CLU_1220290_0_0_1"/>
<dbReference type="InParanoid" id="P15315"/>
<dbReference type="OMA" id="CTHTDGP"/>
<dbReference type="OrthoDB" id="5600085at2759"/>
<dbReference type="BioCyc" id="YEAST:G3O-30654-MONOMER"/>
<dbReference type="BioGRID-ORCS" id="852710">
    <property type="hits" value="10 hits in 13 CRISPR screens"/>
</dbReference>
<dbReference type="PRO" id="PR:P15315"/>
<dbReference type="Proteomes" id="UP000002311">
    <property type="component" value="Chromosome VII"/>
</dbReference>
<dbReference type="RNAct" id="P15315">
    <property type="molecule type" value="protein"/>
</dbReference>
<dbReference type="GO" id="GO:0005634">
    <property type="term" value="C:nucleus"/>
    <property type="evidence" value="ECO:0000314"/>
    <property type="project" value="SGD"/>
</dbReference>
<dbReference type="GO" id="GO:0005507">
    <property type="term" value="F:copper ion binding"/>
    <property type="evidence" value="ECO:0000314"/>
    <property type="project" value="SGD"/>
</dbReference>
<dbReference type="GO" id="GO:0000981">
    <property type="term" value="F:DNA-binding transcription factor activity, RNA polymerase II-specific"/>
    <property type="evidence" value="ECO:0000314"/>
    <property type="project" value="SGD"/>
</dbReference>
<dbReference type="GO" id="GO:0000978">
    <property type="term" value="F:RNA polymerase II cis-regulatory region sequence-specific DNA binding"/>
    <property type="evidence" value="ECO:0000314"/>
    <property type="project" value="SGD"/>
</dbReference>
<dbReference type="GO" id="GO:0006878">
    <property type="term" value="P:intracellular copper ion homeostasis"/>
    <property type="evidence" value="ECO:0000318"/>
    <property type="project" value="GO_Central"/>
</dbReference>
<dbReference type="GO" id="GO:0006879">
    <property type="term" value="P:intracellular iron ion homeostasis"/>
    <property type="evidence" value="ECO:0000318"/>
    <property type="project" value="GO_Central"/>
</dbReference>
<dbReference type="GO" id="GO:0045944">
    <property type="term" value="P:positive regulation of transcription by RNA polymerase II"/>
    <property type="evidence" value="ECO:0000315"/>
    <property type="project" value="SGD"/>
</dbReference>
<dbReference type="GO" id="GO:0006357">
    <property type="term" value="P:regulation of transcription by RNA polymerase II"/>
    <property type="evidence" value="ECO:0000315"/>
    <property type="project" value="SGD"/>
</dbReference>
<dbReference type="GO" id="GO:0046688">
    <property type="term" value="P:response to copper ion"/>
    <property type="evidence" value="ECO:0000315"/>
    <property type="project" value="SGD"/>
</dbReference>
<dbReference type="GO" id="GO:1990169">
    <property type="term" value="P:stress response to copper ion"/>
    <property type="evidence" value="ECO:0000315"/>
    <property type="project" value="SGD"/>
</dbReference>
<dbReference type="FunFam" id="3.90.430.10:FF:000001">
    <property type="entry name" value="Copper fist DNA-binding protein"/>
    <property type="match status" value="1"/>
</dbReference>
<dbReference type="Gene3D" id="3.90.430.10">
    <property type="entry name" value="Copper fist DNA-binding domain"/>
    <property type="match status" value="1"/>
</dbReference>
<dbReference type="InterPro" id="IPR051763">
    <property type="entry name" value="Copper_Homeo_Regul"/>
</dbReference>
<dbReference type="InterPro" id="IPR001083">
    <property type="entry name" value="Cu_fist_DNA-bd_dom"/>
</dbReference>
<dbReference type="InterPro" id="IPR036395">
    <property type="entry name" value="Cu_fist_DNA-bd_dom_sf"/>
</dbReference>
<dbReference type="PANTHER" id="PTHR28088">
    <property type="entry name" value="TRANSCRIPTIONAL ACTIVATOR HAA1-RELATED"/>
    <property type="match status" value="1"/>
</dbReference>
<dbReference type="PANTHER" id="PTHR28088:SF5">
    <property type="entry name" value="TRANSCRIPTIONAL ACTIVATOR HAA1-RELATED"/>
    <property type="match status" value="1"/>
</dbReference>
<dbReference type="Pfam" id="PF00649">
    <property type="entry name" value="Copper-fist"/>
    <property type="match status" value="1"/>
</dbReference>
<dbReference type="PRINTS" id="PR00617">
    <property type="entry name" value="COPPERFIST"/>
</dbReference>
<dbReference type="SMART" id="SM01090">
    <property type="entry name" value="Copper-fist"/>
    <property type="match status" value="1"/>
</dbReference>
<dbReference type="SMART" id="SM00412">
    <property type="entry name" value="Cu_FIST"/>
    <property type="match status" value="1"/>
</dbReference>
<dbReference type="SUPFAM" id="SSF57879">
    <property type="entry name" value="Zinc domain conserved in yeast copper-regulated transcription factors"/>
    <property type="match status" value="1"/>
</dbReference>
<dbReference type="PROSITE" id="PS01119">
    <property type="entry name" value="COPPER_FIST_1"/>
    <property type="match status" value="1"/>
</dbReference>
<dbReference type="PROSITE" id="PS50073">
    <property type="entry name" value="COPPER_FIST_2"/>
    <property type="match status" value="1"/>
</dbReference>
<gene>
    <name type="primary">CUP2</name>
    <name type="synonym">ACE1</name>
    <name type="ordered locus">YGL166W</name>
    <name type="ORF">G1810</name>
</gene>
<organism>
    <name type="scientific">Saccharomyces cerevisiae (strain ATCC 204508 / S288c)</name>
    <name type="common">Baker's yeast</name>
    <dbReference type="NCBI Taxonomy" id="559292"/>
    <lineage>
        <taxon>Eukaryota</taxon>
        <taxon>Fungi</taxon>
        <taxon>Dikarya</taxon>
        <taxon>Ascomycota</taxon>
        <taxon>Saccharomycotina</taxon>
        <taxon>Saccharomycetes</taxon>
        <taxon>Saccharomycetales</taxon>
        <taxon>Saccharomycetaceae</taxon>
        <taxon>Saccharomyces</taxon>
    </lineage>
</organism>
<protein>
    <recommendedName>
        <fullName>Transcriptional activator protein CUP2</fullName>
    </recommendedName>
    <alternativeName>
        <fullName>Copper-fist transcription factor</fullName>
    </alternativeName>
</protein>
<comment type="function">
    <text>Trans-acting regulatory protein that activates transcription of the CUP1 gene (metallothionein) in response to copper ions. Binds to the CUP1 UAS sequence 5'-GCTTCTTTTCCGCTGA-3'. Binds DNA only in presence of copper or silver. Copper seems to alter the conformation of the protein.</text>
</comment>
<comment type="subcellular location">
    <subcellularLocation>
        <location>Nucleus</location>
    </subcellularLocation>
</comment>
<comment type="miscellaneous">
    <text evidence="2">Present with 1760 molecules/cell in log phase SD medium.</text>
</comment>
<evidence type="ECO:0000255" key="1">
    <source>
        <dbReference type="PROSITE-ProRule" id="PRU00055"/>
    </source>
</evidence>
<evidence type="ECO:0000269" key="2">
    <source>
    </source>
</evidence>
<keyword id="KW-0010">Activator</keyword>
<keyword id="KW-0186">Copper</keyword>
<keyword id="KW-0238">DNA-binding</keyword>
<keyword id="KW-0479">Metal-binding</keyword>
<keyword id="KW-0539">Nucleus</keyword>
<keyword id="KW-1185">Reference proteome</keyword>
<keyword id="KW-0804">Transcription</keyword>
<keyword id="KW-0805">Transcription regulation</keyword>
<keyword id="KW-0862">Zinc</keyword>
<accession>P15315</accession>
<accession>D6VTY6</accession>
<proteinExistence type="evidence at protein level"/>
<name>CUP2_YEAST</name>
<sequence>MVVINGVKYACETCIRGHRAAQCTHTDGPLQMIRRKGRPSTTCGHCKELRRTKNFNPSGGCMCASARRPAVGSKEDETRCRCDEGEPCKCHTKRKSSRKSKGGSCHRRANDEAAHVNGLGIADLDVLLGLNGRSSDVDMTTTLPSLKPPLQNGEIKADSIDNLDLASLDPLEQSPSISMEPVSINETGSAYTTTNTALNDIDIPFSINELNELYKQVSSHNSHSQ</sequence>
<reference key="1">
    <citation type="journal article" date="1988" name="Cell">
        <title>Copper activates metallothionein gene transcription by altering the conformation of a specific DNA binding protein.</title>
        <authorList>
            <person name="Fuerst P."/>
            <person name="Hu S."/>
            <person name="Hackett R."/>
            <person name="Hamer D."/>
        </authorList>
    </citation>
    <scope>NUCLEOTIDE SEQUENCE [GENOMIC DNA]</scope>
</reference>
<reference key="2">
    <citation type="journal article" date="1989" name="Mol. Cell. Biol.">
        <title>A cysteine-rich nuclear protein activates yeast metallothionein gene transcription.</title>
        <authorList>
            <person name="Szczypka M.S."/>
            <person name="Thiele D.J."/>
        </authorList>
    </citation>
    <scope>NUCLEOTIDE SEQUENCE [GENOMIC DNA]</scope>
</reference>
<reference key="3">
    <citation type="journal article" date="1995" name="Yeast">
        <title>DNA sequence analysis of a 35 kb segment from Saccharomyces cerevisiae chromosome VII reveals 19 open reading frames including RAD54, ACE1/CUP2, PMR1, RCK1, AMS1 and CAL1/CDC43.</title>
        <authorList>
            <person name="James C.M."/>
            <person name="Indge K.J."/>
            <person name="Oliver S.G."/>
        </authorList>
    </citation>
    <scope>NUCLEOTIDE SEQUENCE [GENOMIC DNA]</scope>
</reference>
<reference key="4">
    <citation type="journal article" date="1997" name="Nature">
        <title>The nucleotide sequence of Saccharomyces cerevisiae chromosome VII.</title>
        <authorList>
            <person name="Tettelin H."/>
            <person name="Agostoni-Carbone M.L."/>
            <person name="Albermann K."/>
            <person name="Albers M."/>
            <person name="Arroyo J."/>
            <person name="Backes U."/>
            <person name="Barreiros T."/>
            <person name="Bertani I."/>
            <person name="Bjourson A.J."/>
            <person name="Brueckner M."/>
            <person name="Bruschi C.V."/>
            <person name="Carignani G."/>
            <person name="Castagnoli L."/>
            <person name="Cerdan E."/>
            <person name="Clemente M.L."/>
            <person name="Coblenz A."/>
            <person name="Coglievina M."/>
            <person name="Coissac E."/>
            <person name="Defoor E."/>
            <person name="Del Bino S."/>
            <person name="Delius H."/>
            <person name="Delneri D."/>
            <person name="de Wergifosse P."/>
            <person name="Dujon B."/>
            <person name="Durand P."/>
            <person name="Entian K.-D."/>
            <person name="Eraso P."/>
            <person name="Escribano V."/>
            <person name="Fabiani L."/>
            <person name="Fartmann B."/>
            <person name="Feroli F."/>
            <person name="Feuermann M."/>
            <person name="Frontali L."/>
            <person name="Garcia-Gonzalez M."/>
            <person name="Garcia-Saez M.I."/>
            <person name="Goffeau A."/>
            <person name="Guerreiro P."/>
            <person name="Hani J."/>
            <person name="Hansen M."/>
            <person name="Hebling U."/>
            <person name="Hernandez K."/>
            <person name="Heumann K."/>
            <person name="Hilger F."/>
            <person name="Hofmann B."/>
            <person name="Indge K.J."/>
            <person name="James C.M."/>
            <person name="Klima R."/>
            <person name="Koetter P."/>
            <person name="Kramer B."/>
            <person name="Kramer W."/>
            <person name="Lauquin G."/>
            <person name="Leuther H."/>
            <person name="Louis E.J."/>
            <person name="Maillier E."/>
            <person name="Marconi A."/>
            <person name="Martegani E."/>
            <person name="Mazon M.J."/>
            <person name="Mazzoni C."/>
            <person name="McReynolds A.D.K."/>
            <person name="Melchioretto P."/>
            <person name="Mewes H.-W."/>
            <person name="Minenkova O."/>
            <person name="Mueller-Auer S."/>
            <person name="Nawrocki A."/>
            <person name="Netter P."/>
            <person name="Neu R."/>
            <person name="Nombela C."/>
            <person name="Oliver S.G."/>
            <person name="Panzeri L."/>
            <person name="Paoluzi S."/>
            <person name="Plevani P."/>
            <person name="Portetelle D."/>
            <person name="Portillo F."/>
            <person name="Potier S."/>
            <person name="Purnelle B."/>
            <person name="Rieger M."/>
            <person name="Riles L."/>
            <person name="Rinaldi T."/>
            <person name="Robben J."/>
            <person name="Rodrigues-Pousada C."/>
            <person name="Rodriguez-Belmonte E."/>
            <person name="Rodriguez-Torres A.M."/>
            <person name="Rose M."/>
            <person name="Ruzzi M."/>
            <person name="Saliola M."/>
            <person name="Sanchez-Perez M."/>
            <person name="Schaefer B."/>
            <person name="Schaefer M."/>
            <person name="Scharfe M."/>
            <person name="Schmidheini T."/>
            <person name="Schreer A."/>
            <person name="Skala J."/>
            <person name="Souciet J.-L."/>
            <person name="Steensma H.Y."/>
            <person name="Talla E."/>
            <person name="Thierry A."/>
            <person name="Vandenbol M."/>
            <person name="van der Aart Q.J.M."/>
            <person name="Van Dyck L."/>
            <person name="Vanoni M."/>
            <person name="Verhasselt P."/>
            <person name="Voet M."/>
            <person name="Volckaert G."/>
            <person name="Wambutt R."/>
            <person name="Watson M.D."/>
            <person name="Weber N."/>
            <person name="Wedler E."/>
            <person name="Wedler H."/>
            <person name="Wipfli P."/>
            <person name="Wolf K."/>
            <person name="Wright L.F."/>
            <person name="Zaccaria P."/>
            <person name="Zimmermann M."/>
            <person name="Zollner A."/>
            <person name="Kleine K."/>
        </authorList>
    </citation>
    <scope>NUCLEOTIDE SEQUENCE [LARGE SCALE GENOMIC DNA]</scope>
    <source>
        <strain>ATCC 204508 / S288c</strain>
    </source>
</reference>
<reference key="5">
    <citation type="journal article" date="2014" name="G3 (Bethesda)">
        <title>The reference genome sequence of Saccharomyces cerevisiae: Then and now.</title>
        <authorList>
            <person name="Engel S.R."/>
            <person name="Dietrich F.S."/>
            <person name="Fisk D.G."/>
            <person name="Binkley G."/>
            <person name="Balakrishnan R."/>
            <person name="Costanzo M.C."/>
            <person name="Dwight S.S."/>
            <person name="Hitz B.C."/>
            <person name="Karra K."/>
            <person name="Nash R.S."/>
            <person name="Weng S."/>
            <person name="Wong E.D."/>
            <person name="Lloyd P."/>
            <person name="Skrzypek M.S."/>
            <person name="Miyasato S.R."/>
            <person name="Simison M."/>
            <person name="Cherry J.M."/>
        </authorList>
    </citation>
    <scope>GENOME REANNOTATION</scope>
    <source>
        <strain>ATCC 204508 / S288c</strain>
    </source>
</reference>
<reference key="6">
    <citation type="journal article" date="2007" name="Genome Res.">
        <title>Approaching a complete repository of sequence-verified protein-encoding clones for Saccharomyces cerevisiae.</title>
        <authorList>
            <person name="Hu Y."/>
            <person name="Rolfs A."/>
            <person name="Bhullar B."/>
            <person name="Murthy T.V.S."/>
            <person name="Zhu C."/>
            <person name="Berger M.F."/>
            <person name="Camargo A.A."/>
            <person name="Kelley F."/>
            <person name="McCarron S."/>
            <person name="Jepson D."/>
            <person name="Richardson A."/>
            <person name="Raphael J."/>
            <person name="Moreira D."/>
            <person name="Taycher E."/>
            <person name="Zuo D."/>
            <person name="Mohr S."/>
            <person name="Kane M.F."/>
            <person name="Williamson J."/>
            <person name="Simpson A.J.G."/>
            <person name="Bulyk M.L."/>
            <person name="Harlow E."/>
            <person name="Marsischky G."/>
            <person name="Kolodner R.D."/>
            <person name="LaBaer J."/>
        </authorList>
    </citation>
    <scope>NUCLEOTIDE SEQUENCE [GENOMIC DNA]</scope>
    <source>
        <strain>ATCC 204508 / S288c</strain>
    </source>
</reference>
<reference key="7">
    <citation type="journal article" date="1989" name="Mol. Cell. Biol.">
        <title>The CUP2 gene product, regulator of yeast metallothionein expression, is a copper-activated DNA-binding protein.</title>
        <authorList>
            <person name="Buchman C."/>
            <person name="Skroch P."/>
            <person name="Welch J."/>
            <person name="Fogel S."/>
            <person name="Karin M."/>
        </authorList>
    </citation>
    <scope>NUCLEOTIDE SEQUENCE [GENOMIC DNA] OF 1-48</scope>
</reference>
<reference key="8">
    <citation type="submission" date="1995-03" db="EMBL/GenBank/DDBJ databases">
        <authorList>
            <person name="Klima R."/>
            <person name="Coglievina M."/>
            <person name="Zaccaria P."/>
            <person name="Bertani I."/>
            <person name="Bruschi C.V."/>
        </authorList>
    </citation>
    <scope>NUCLEOTIDE SEQUENCE [GENOMIC DNA] OF 1-33</scope>
    <source>
        <strain>ATCC 96604 / S288c / FY1679</strain>
    </source>
</reference>
<reference key="9">
    <citation type="journal article" date="1993" name="J. Biol. Chem.">
        <title>Regulation of metallothionein genes by the ACE1 and AMT1 transcription factors.</title>
        <authorList>
            <person name="Thorvaldsen J.L."/>
            <person name="Sewell A.K."/>
            <person name="McCowen C.L."/>
            <person name="Winge D.R."/>
        </authorList>
    </citation>
    <scope>CHARACTERIZATION</scope>
</reference>
<reference key="10">
    <citation type="journal article" date="2003" name="Nature">
        <title>Global analysis of protein expression in yeast.</title>
        <authorList>
            <person name="Ghaemmaghami S."/>
            <person name="Huh W.-K."/>
            <person name="Bower K."/>
            <person name="Howson R.W."/>
            <person name="Belle A."/>
            <person name="Dephoure N."/>
            <person name="O'Shea E.K."/>
            <person name="Weissman J.S."/>
        </authorList>
    </citation>
    <scope>LEVEL OF PROTEIN EXPRESSION [LARGE SCALE ANALYSIS]</scope>
</reference>